<organism>
    <name type="scientific">Methanocaldococcus jannaschii (strain ATCC 43067 / DSM 2661 / JAL-1 / JCM 10045 / NBRC 100440)</name>
    <name type="common">Methanococcus jannaschii</name>
    <dbReference type="NCBI Taxonomy" id="243232"/>
    <lineage>
        <taxon>Archaea</taxon>
        <taxon>Methanobacteriati</taxon>
        <taxon>Methanobacteriota</taxon>
        <taxon>Methanomada group</taxon>
        <taxon>Methanococci</taxon>
        <taxon>Methanococcales</taxon>
        <taxon>Methanocaldococcaceae</taxon>
        <taxon>Methanocaldococcus</taxon>
    </lineage>
</organism>
<comment type="cofactor">
    <cofactor evidence="3">
        <name>[4Fe-4S] cluster</name>
        <dbReference type="ChEBI" id="CHEBI:49883"/>
    </cofactor>
    <text evidence="3">Binds 2 [4Fe-4S] clusters.</text>
</comment>
<evidence type="ECO:0000255" key="1"/>
<evidence type="ECO:0000255" key="2">
    <source>
        <dbReference type="PROSITE-ProRule" id="PRU00711"/>
    </source>
</evidence>
<evidence type="ECO:0000305" key="3"/>
<keyword id="KW-0004">4Fe-4S</keyword>
<keyword id="KW-0408">Iron</keyword>
<keyword id="KW-0411">Iron-sulfur</keyword>
<keyword id="KW-0479">Metal-binding</keyword>
<keyword id="KW-1185">Reference proteome</keyword>
<keyword id="KW-0677">Repeat</keyword>
<accession>Q58567</accession>
<sequence>MKAYELVVYPERCHGCGNCVVSCPVNAKHPETWGGKGPYSDDVVIRVENGVVTVVNQDLCGGCGACIEACPVNAIELVFKRK</sequence>
<name>FWDG_METJA</name>
<feature type="chain" id="PRO_0000159141" description="Polyferredoxin protein FwdG">
    <location>
        <begin position="1"/>
        <end position="82"/>
    </location>
</feature>
<feature type="domain" description="4Fe-4S ferredoxin-type 1" evidence="2">
    <location>
        <begin position="4"/>
        <end position="33"/>
    </location>
</feature>
<feature type="domain" description="4Fe-4S ferredoxin-type 2" evidence="2">
    <location>
        <begin position="51"/>
        <end position="80"/>
    </location>
</feature>
<feature type="binding site" evidence="1">
    <location>
        <position position="13"/>
    </location>
    <ligand>
        <name>[4Fe-4S] cluster</name>
        <dbReference type="ChEBI" id="CHEBI:49883"/>
        <label>1</label>
    </ligand>
</feature>
<feature type="binding site" evidence="1">
    <location>
        <position position="16"/>
    </location>
    <ligand>
        <name>[4Fe-4S] cluster</name>
        <dbReference type="ChEBI" id="CHEBI:49883"/>
        <label>1</label>
    </ligand>
</feature>
<feature type="binding site" evidence="1">
    <location>
        <position position="19"/>
    </location>
    <ligand>
        <name>[4Fe-4S] cluster</name>
        <dbReference type="ChEBI" id="CHEBI:49883"/>
        <label>1</label>
    </ligand>
</feature>
<feature type="binding site" evidence="1">
    <location>
        <position position="23"/>
    </location>
    <ligand>
        <name>[4Fe-4S] cluster</name>
        <dbReference type="ChEBI" id="CHEBI:49883"/>
        <label>1</label>
    </ligand>
</feature>
<feature type="binding site" evidence="1">
    <location>
        <position position="60"/>
    </location>
    <ligand>
        <name>[4Fe-4S] cluster</name>
        <dbReference type="ChEBI" id="CHEBI:49883"/>
        <label>2</label>
    </ligand>
</feature>
<feature type="binding site" evidence="1">
    <location>
        <position position="63"/>
    </location>
    <ligand>
        <name>[4Fe-4S] cluster</name>
        <dbReference type="ChEBI" id="CHEBI:49883"/>
        <label>2</label>
    </ligand>
</feature>
<feature type="binding site" evidence="1">
    <location>
        <position position="66"/>
    </location>
    <ligand>
        <name>[4Fe-4S] cluster</name>
        <dbReference type="ChEBI" id="CHEBI:49883"/>
        <label>2</label>
    </ligand>
</feature>
<feature type="binding site" evidence="1">
    <location>
        <position position="70"/>
    </location>
    <ligand>
        <name>[4Fe-4S] cluster</name>
        <dbReference type="ChEBI" id="CHEBI:49883"/>
        <label>2</label>
    </ligand>
</feature>
<gene>
    <name type="primary">fwdG</name>
    <name type="ordered locus">MJ1167</name>
</gene>
<dbReference type="EMBL" id="L77117">
    <property type="protein sequence ID" value="AAB99169.1"/>
    <property type="molecule type" value="Genomic_DNA"/>
</dbReference>
<dbReference type="PIR" id="F64445">
    <property type="entry name" value="F64445"/>
</dbReference>
<dbReference type="RefSeq" id="WP_010870680.1">
    <property type="nucleotide sequence ID" value="NC_000909.1"/>
</dbReference>
<dbReference type="SMR" id="Q58567"/>
<dbReference type="FunCoup" id="Q58567">
    <property type="interactions" value="91"/>
</dbReference>
<dbReference type="STRING" id="243232.MJ_1167"/>
<dbReference type="PaxDb" id="243232-MJ_1167"/>
<dbReference type="EnsemblBacteria" id="AAB99169">
    <property type="protein sequence ID" value="AAB99169"/>
    <property type="gene ID" value="MJ_1167"/>
</dbReference>
<dbReference type="GeneID" id="1452065"/>
<dbReference type="KEGG" id="mja:MJ_1167"/>
<dbReference type="eggNOG" id="arCOG00292">
    <property type="taxonomic scope" value="Archaea"/>
</dbReference>
<dbReference type="HOGENOM" id="CLU_139698_5_4_2"/>
<dbReference type="InParanoid" id="Q58567"/>
<dbReference type="OrthoDB" id="230142at2157"/>
<dbReference type="PhylomeDB" id="Q58567"/>
<dbReference type="Proteomes" id="UP000000805">
    <property type="component" value="Chromosome"/>
</dbReference>
<dbReference type="GO" id="GO:0051539">
    <property type="term" value="F:4 iron, 4 sulfur cluster binding"/>
    <property type="evidence" value="ECO:0007669"/>
    <property type="project" value="UniProtKB-KW"/>
</dbReference>
<dbReference type="GO" id="GO:0046872">
    <property type="term" value="F:metal ion binding"/>
    <property type="evidence" value="ECO:0007669"/>
    <property type="project" value="UniProtKB-KW"/>
</dbReference>
<dbReference type="GO" id="GO:0016491">
    <property type="term" value="F:oxidoreductase activity"/>
    <property type="evidence" value="ECO:0007669"/>
    <property type="project" value="UniProtKB-ARBA"/>
</dbReference>
<dbReference type="Gene3D" id="3.30.70.20">
    <property type="match status" value="2"/>
</dbReference>
<dbReference type="InterPro" id="IPR017896">
    <property type="entry name" value="4Fe4S_Fe-S-bd"/>
</dbReference>
<dbReference type="InterPro" id="IPR017900">
    <property type="entry name" value="4Fe4S_Fe_S_CS"/>
</dbReference>
<dbReference type="InterPro" id="IPR050157">
    <property type="entry name" value="PSI_iron-sulfur_center"/>
</dbReference>
<dbReference type="PANTHER" id="PTHR24960:SF79">
    <property type="entry name" value="PHOTOSYSTEM I IRON-SULFUR CENTER"/>
    <property type="match status" value="1"/>
</dbReference>
<dbReference type="PANTHER" id="PTHR24960">
    <property type="entry name" value="PHOTOSYSTEM I IRON-SULFUR CENTER-RELATED"/>
    <property type="match status" value="1"/>
</dbReference>
<dbReference type="Pfam" id="PF12838">
    <property type="entry name" value="Fer4_7"/>
    <property type="match status" value="1"/>
</dbReference>
<dbReference type="SUPFAM" id="SSF54862">
    <property type="entry name" value="4Fe-4S ferredoxins"/>
    <property type="match status" value="1"/>
</dbReference>
<dbReference type="PROSITE" id="PS00198">
    <property type="entry name" value="4FE4S_FER_1"/>
    <property type="match status" value="2"/>
</dbReference>
<dbReference type="PROSITE" id="PS51379">
    <property type="entry name" value="4FE4S_FER_2"/>
    <property type="match status" value="2"/>
</dbReference>
<proteinExistence type="predicted"/>
<protein>
    <recommendedName>
        <fullName>Polyferredoxin protein FwdG</fullName>
    </recommendedName>
</protein>
<reference key="1">
    <citation type="journal article" date="1996" name="Science">
        <title>Complete genome sequence of the methanogenic archaeon, Methanococcus jannaschii.</title>
        <authorList>
            <person name="Bult C.J."/>
            <person name="White O."/>
            <person name="Olsen G.J."/>
            <person name="Zhou L."/>
            <person name="Fleischmann R.D."/>
            <person name="Sutton G.G."/>
            <person name="Blake J.A."/>
            <person name="FitzGerald L.M."/>
            <person name="Clayton R.A."/>
            <person name="Gocayne J.D."/>
            <person name="Kerlavage A.R."/>
            <person name="Dougherty B.A."/>
            <person name="Tomb J.-F."/>
            <person name="Adams M.D."/>
            <person name="Reich C.I."/>
            <person name="Overbeek R."/>
            <person name="Kirkness E.F."/>
            <person name="Weinstock K.G."/>
            <person name="Merrick J.M."/>
            <person name="Glodek A."/>
            <person name="Scott J.L."/>
            <person name="Geoghagen N.S.M."/>
            <person name="Weidman J.F."/>
            <person name="Fuhrmann J.L."/>
            <person name="Nguyen D."/>
            <person name="Utterback T.R."/>
            <person name="Kelley J.M."/>
            <person name="Peterson J.D."/>
            <person name="Sadow P.W."/>
            <person name="Hanna M.C."/>
            <person name="Cotton M.D."/>
            <person name="Roberts K.M."/>
            <person name="Hurst M.A."/>
            <person name="Kaine B.P."/>
            <person name="Borodovsky M."/>
            <person name="Klenk H.-P."/>
            <person name="Fraser C.M."/>
            <person name="Smith H.O."/>
            <person name="Woese C.R."/>
            <person name="Venter J.C."/>
        </authorList>
    </citation>
    <scope>NUCLEOTIDE SEQUENCE [LARGE SCALE GENOMIC DNA]</scope>
    <source>
        <strain>ATCC 43067 / DSM 2661 / JAL-1 / JCM 10045 / NBRC 100440</strain>
    </source>
</reference>